<proteinExistence type="inferred from homology"/>
<dbReference type="EC" id="3.1.3.11" evidence="1"/>
<dbReference type="EMBL" id="AE017125">
    <property type="protein sequence ID" value="AAP77941.1"/>
    <property type="molecule type" value="Genomic_DNA"/>
</dbReference>
<dbReference type="SMR" id="Q7VGH7"/>
<dbReference type="STRING" id="235279.HH_1344"/>
<dbReference type="KEGG" id="hhe:HH_1344"/>
<dbReference type="eggNOG" id="COG0158">
    <property type="taxonomic scope" value="Bacteria"/>
</dbReference>
<dbReference type="HOGENOM" id="CLU_039977_1_0_7"/>
<dbReference type="OrthoDB" id="9806756at2"/>
<dbReference type="UniPathway" id="UPA00138"/>
<dbReference type="Proteomes" id="UP000002495">
    <property type="component" value="Chromosome"/>
</dbReference>
<dbReference type="GO" id="GO:0005829">
    <property type="term" value="C:cytosol"/>
    <property type="evidence" value="ECO:0007669"/>
    <property type="project" value="TreeGrafter"/>
</dbReference>
<dbReference type="GO" id="GO:0042132">
    <property type="term" value="F:fructose 1,6-bisphosphate 1-phosphatase activity"/>
    <property type="evidence" value="ECO:0007669"/>
    <property type="project" value="UniProtKB-UniRule"/>
</dbReference>
<dbReference type="GO" id="GO:0000287">
    <property type="term" value="F:magnesium ion binding"/>
    <property type="evidence" value="ECO:0007669"/>
    <property type="project" value="UniProtKB-UniRule"/>
</dbReference>
<dbReference type="GO" id="GO:0030388">
    <property type="term" value="P:fructose 1,6-bisphosphate metabolic process"/>
    <property type="evidence" value="ECO:0007669"/>
    <property type="project" value="TreeGrafter"/>
</dbReference>
<dbReference type="GO" id="GO:0006002">
    <property type="term" value="P:fructose 6-phosphate metabolic process"/>
    <property type="evidence" value="ECO:0007669"/>
    <property type="project" value="TreeGrafter"/>
</dbReference>
<dbReference type="GO" id="GO:0006000">
    <property type="term" value="P:fructose metabolic process"/>
    <property type="evidence" value="ECO:0007669"/>
    <property type="project" value="TreeGrafter"/>
</dbReference>
<dbReference type="GO" id="GO:0006094">
    <property type="term" value="P:gluconeogenesis"/>
    <property type="evidence" value="ECO:0007669"/>
    <property type="project" value="UniProtKB-UniRule"/>
</dbReference>
<dbReference type="GO" id="GO:0005986">
    <property type="term" value="P:sucrose biosynthetic process"/>
    <property type="evidence" value="ECO:0007669"/>
    <property type="project" value="TreeGrafter"/>
</dbReference>
<dbReference type="Gene3D" id="3.40.190.80">
    <property type="match status" value="1"/>
</dbReference>
<dbReference type="Gene3D" id="3.30.540.10">
    <property type="entry name" value="Fructose-1,6-Bisphosphatase, subunit A, domain 1"/>
    <property type="match status" value="1"/>
</dbReference>
<dbReference type="HAMAP" id="MF_01855">
    <property type="entry name" value="FBPase_class1"/>
    <property type="match status" value="1"/>
</dbReference>
<dbReference type="InterPro" id="IPR044015">
    <property type="entry name" value="FBPase_C_dom"/>
</dbReference>
<dbReference type="InterPro" id="IPR000146">
    <property type="entry name" value="FBPase_class-1"/>
</dbReference>
<dbReference type="InterPro" id="IPR033391">
    <property type="entry name" value="FBPase_N"/>
</dbReference>
<dbReference type="InterPro" id="IPR028343">
    <property type="entry name" value="FBPtase"/>
</dbReference>
<dbReference type="InterPro" id="IPR023079">
    <property type="entry name" value="SBPase"/>
</dbReference>
<dbReference type="NCBIfam" id="NF006784">
    <property type="entry name" value="PRK09293.2-5"/>
    <property type="match status" value="1"/>
</dbReference>
<dbReference type="PANTHER" id="PTHR11556">
    <property type="entry name" value="FRUCTOSE-1,6-BISPHOSPHATASE-RELATED"/>
    <property type="match status" value="1"/>
</dbReference>
<dbReference type="PANTHER" id="PTHR11556:SF35">
    <property type="entry name" value="SEDOHEPTULOSE-1,7-BISPHOSPHATASE, CHLOROPLASTIC"/>
    <property type="match status" value="1"/>
</dbReference>
<dbReference type="Pfam" id="PF00316">
    <property type="entry name" value="FBPase"/>
    <property type="match status" value="1"/>
</dbReference>
<dbReference type="Pfam" id="PF18913">
    <property type="entry name" value="FBPase_C"/>
    <property type="match status" value="1"/>
</dbReference>
<dbReference type="PIRSF" id="PIRSF500210">
    <property type="entry name" value="FBPtase"/>
    <property type="match status" value="1"/>
</dbReference>
<dbReference type="PIRSF" id="PIRSF000904">
    <property type="entry name" value="FBPtase_SBPase"/>
    <property type="match status" value="1"/>
</dbReference>
<dbReference type="PRINTS" id="PR01958">
    <property type="entry name" value="S17BPHPHTASE"/>
</dbReference>
<dbReference type="SUPFAM" id="SSF56655">
    <property type="entry name" value="Carbohydrate phosphatase"/>
    <property type="match status" value="1"/>
</dbReference>
<name>F16PA_HELHP</name>
<reference key="1">
    <citation type="journal article" date="2003" name="Proc. Natl. Acad. Sci. U.S.A.">
        <title>The complete genome sequence of the carcinogenic bacterium Helicobacter hepaticus.</title>
        <authorList>
            <person name="Suerbaum S."/>
            <person name="Josenhans C."/>
            <person name="Sterzenbach T."/>
            <person name="Drescher B."/>
            <person name="Brandt P."/>
            <person name="Bell M."/>
            <person name="Droege M."/>
            <person name="Fartmann B."/>
            <person name="Fischer H.-P."/>
            <person name="Ge Z."/>
            <person name="Hoerster A."/>
            <person name="Holland R."/>
            <person name="Klein K."/>
            <person name="Koenig J."/>
            <person name="Macko L."/>
            <person name="Mendz G.L."/>
            <person name="Nyakatura G."/>
            <person name="Schauer D.B."/>
            <person name="Shen Z."/>
            <person name="Weber J."/>
            <person name="Frosch M."/>
            <person name="Fox J.G."/>
        </authorList>
    </citation>
    <scope>NUCLEOTIDE SEQUENCE [LARGE SCALE GENOMIC DNA]</scope>
    <source>
        <strain>ATCC 51449 / 3B1</strain>
    </source>
</reference>
<feature type="chain" id="PRO_0000364573" description="Fructose-1,6-bisphosphatase class 1">
    <location>
        <begin position="1"/>
        <end position="279"/>
    </location>
</feature>
<feature type="binding site" evidence="1">
    <location>
        <position position="65"/>
    </location>
    <ligand>
        <name>Mg(2+)</name>
        <dbReference type="ChEBI" id="CHEBI:18420"/>
        <label>1</label>
    </ligand>
</feature>
<feature type="binding site" evidence="1">
    <location>
        <position position="85"/>
    </location>
    <ligand>
        <name>Mg(2+)</name>
        <dbReference type="ChEBI" id="CHEBI:18420"/>
        <label>1</label>
    </ligand>
</feature>
<feature type="binding site" evidence="1">
    <location>
        <position position="85"/>
    </location>
    <ligand>
        <name>Mg(2+)</name>
        <dbReference type="ChEBI" id="CHEBI:18420"/>
        <label>2</label>
    </ligand>
</feature>
<feature type="binding site" evidence="1">
    <location>
        <position position="87"/>
    </location>
    <ligand>
        <name>Mg(2+)</name>
        <dbReference type="ChEBI" id="CHEBI:18420"/>
        <label>1</label>
    </ligand>
</feature>
<feature type="binding site" evidence="1">
    <location>
        <begin position="88"/>
        <end position="91"/>
    </location>
    <ligand>
        <name>substrate</name>
    </ligand>
</feature>
<feature type="binding site" evidence="1">
    <location>
        <position position="88"/>
    </location>
    <ligand>
        <name>Mg(2+)</name>
        <dbReference type="ChEBI" id="CHEBI:18420"/>
        <label>2</label>
    </ligand>
</feature>
<feature type="binding site" evidence="1">
    <location>
        <position position="190"/>
    </location>
    <ligand>
        <name>substrate</name>
    </ligand>
</feature>
<feature type="binding site" evidence="1">
    <location>
        <position position="221"/>
    </location>
    <ligand>
        <name>substrate</name>
    </ligand>
</feature>
<feature type="binding site" evidence="1">
    <location>
        <position position="227"/>
    </location>
    <ligand>
        <name>Mg(2+)</name>
        <dbReference type="ChEBI" id="CHEBI:18420"/>
        <label>2</label>
    </ligand>
</feature>
<protein>
    <recommendedName>
        <fullName evidence="1">Fructose-1,6-bisphosphatase class 1</fullName>
        <shortName evidence="1">FBPase class 1</shortName>
        <ecNumber evidence="1">3.1.3.11</ecNumber>
    </recommendedName>
    <alternativeName>
        <fullName evidence="1">D-fructose-1,6-bisphosphate 1-phosphohydrolase class 1</fullName>
    </alternativeName>
</protein>
<accession>Q7VGH7</accession>
<keyword id="KW-0119">Carbohydrate metabolism</keyword>
<keyword id="KW-0963">Cytoplasm</keyword>
<keyword id="KW-0378">Hydrolase</keyword>
<keyword id="KW-0460">Magnesium</keyword>
<keyword id="KW-0479">Metal-binding</keyword>
<keyword id="KW-1185">Reference proteome</keyword>
<comment type="catalytic activity">
    <reaction evidence="1">
        <text>beta-D-fructose 1,6-bisphosphate + H2O = beta-D-fructose 6-phosphate + phosphate</text>
        <dbReference type="Rhea" id="RHEA:11064"/>
        <dbReference type="ChEBI" id="CHEBI:15377"/>
        <dbReference type="ChEBI" id="CHEBI:32966"/>
        <dbReference type="ChEBI" id="CHEBI:43474"/>
        <dbReference type="ChEBI" id="CHEBI:57634"/>
        <dbReference type="EC" id="3.1.3.11"/>
    </reaction>
</comment>
<comment type="cofactor">
    <cofactor evidence="1">
        <name>Mg(2+)</name>
        <dbReference type="ChEBI" id="CHEBI:18420"/>
    </cofactor>
    <text evidence="1">Binds 2 magnesium ions per subunit.</text>
</comment>
<comment type="pathway">
    <text evidence="1">Carbohydrate biosynthesis; gluconeogenesis.</text>
</comment>
<comment type="subunit">
    <text evidence="1">Homotetramer.</text>
</comment>
<comment type="subcellular location">
    <subcellularLocation>
        <location evidence="1">Cytoplasm</location>
    </subcellularLocation>
</comment>
<comment type="similarity">
    <text evidence="1">Belongs to the FBPase class 1 family.</text>
</comment>
<gene>
    <name evidence="1" type="primary">fbp</name>
    <name type="ordered locus">HH_1344</name>
</gene>
<organism>
    <name type="scientific">Helicobacter hepaticus (strain ATCC 51449 / 3B1)</name>
    <dbReference type="NCBI Taxonomy" id="235279"/>
    <lineage>
        <taxon>Bacteria</taxon>
        <taxon>Pseudomonadati</taxon>
        <taxon>Campylobacterota</taxon>
        <taxon>Epsilonproteobacteria</taxon>
        <taxon>Campylobacterales</taxon>
        <taxon>Helicobacteraceae</taxon>
        <taxon>Helicobacter</taxon>
    </lineage>
</organism>
<evidence type="ECO:0000255" key="1">
    <source>
        <dbReference type="HAMAP-Rule" id="MF_01855"/>
    </source>
</evidence>
<sequence length="279" mass="31176">MISIIIDSLRESALHIDSLLKDTSTSYLQSINASGDMQLEIDVRVDKFLSEKLLNLPCVKAICSEEQEEIMYSENKNAPYIIAYDPLDGSSLIDSNLSIGTIFGIYNEELSAKHLIASGYIIYGPRLEMVVAQEQALHYRYNGNMWRNLGALALNTKGKINAPGGTQKHWENKHKAMIESLFAQGYRLRYSGGMVPDLHQILIKGGGLFSYPATSDAPNGKLRKLFEVFPFAFVYEKAGGFATNGTYRILELEVAHLHDSTPCFFGSQSEMNLVKEVYE</sequence>